<protein>
    <recommendedName>
        <fullName evidence="1">Cell division protein SepF</fullName>
    </recommendedName>
</protein>
<gene>
    <name evidence="1" type="primary">sepF</name>
    <name type="ordered locus">PMT_0207</name>
</gene>
<reference key="1">
    <citation type="journal article" date="2003" name="Nature">
        <title>Genome divergence in two Prochlorococcus ecotypes reflects oceanic niche differentiation.</title>
        <authorList>
            <person name="Rocap G."/>
            <person name="Larimer F.W."/>
            <person name="Lamerdin J.E."/>
            <person name="Malfatti S."/>
            <person name="Chain P."/>
            <person name="Ahlgren N.A."/>
            <person name="Arellano A."/>
            <person name="Coleman M."/>
            <person name="Hauser L."/>
            <person name="Hess W.R."/>
            <person name="Johnson Z.I."/>
            <person name="Land M.L."/>
            <person name="Lindell D."/>
            <person name="Post A.F."/>
            <person name="Regala W."/>
            <person name="Shah M."/>
            <person name="Shaw S.L."/>
            <person name="Steglich C."/>
            <person name="Sullivan M.B."/>
            <person name="Ting C.S."/>
            <person name="Tolonen A."/>
            <person name="Webb E.A."/>
            <person name="Zinser E.R."/>
            <person name="Chisholm S.W."/>
        </authorList>
    </citation>
    <scope>NUCLEOTIDE SEQUENCE [LARGE SCALE GENOMIC DNA]</scope>
    <source>
        <strain>MIT 9313</strain>
    </source>
</reference>
<dbReference type="EMBL" id="BX548175">
    <property type="protein sequence ID" value="CAE20382.1"/>
    <property type="molecule type" value="Genomic_DNA"/>
</dbReference>
<dbReference type="RefSeq" id="WP_011129586.1">
    <property type="nucleotide sequence ID" value="NC_005071.1"/>
</dbReference>
<dbReference type="SMR" id="Q7V8W6"/>
<dbReference type="KEGG" id="pmt:PMT_0207"/>
<dbReference type="eggNOG" id="COG1799">
    <property type="taxonomic scope" value="Bacteria"/>
</dbReference>
<dbReference type="HOGENOM" id="CLU_078499_1_0_3"/>
<dbReference type="OrthoDB" id="9815206at2"/>
<dbReference type="Proteomes" id="UP000001423">
    <property type="component" value="Chromosome"/>
</dbReference>
<dbReference type="GO" id="GO:0005737">
    <property type="term" value="C:cytoplasm"/>
    <property type="evidence" value="ECO:0007669"/>
    <property type="project" value="UniProtKB-SubCell"/>
</dbReference>
<dbReference type="GO" id="GO:0000917">
    <property type="term" value="P:division septum assembly"/>
    <property type="evidence" value="ECO:0007669"/>
    <property type="project" value="UniProtKB-KW"/>
</dbReference>
<dbReference type="GO" id="GO:0043093">
    <property type="term" value="P:FtsZ-dependent cytokinesis"/>
    <property type="evidence" value="ECO:0007669"/>
    <property type="project" value="UniProtKB-UniRule"/>
</dbReference>
<dbReference type="Gene3D" id="3.30.110.150">
    <property type="entry name" value="SepF-like protein"/>
    <property type="match status" value="1"/>
</dbReference>
<dbReference type="HAMAP" id="MF_01197">
    <property type="entry name" value="SepF"/>
    <property type="match status" value="1"/>
</dbReference>
<dbReference type="InterPro" id="IPR023052">
    <property type="entry name" value="Cell_div_SepF"/>
</dbReference>
<dbReference type="InterPro" id="IPR007561">
    <property type="entry name" value="Cell_div_SepF/SepF-rel"/>
</dbReference>
<dbReference type="InterPro" id="IPR038594">
    <property type="entry name" value="SepF-like_sf"/>
</dbReference>
<dbReference type="PANTHER" id="PTHR35798">
    <property type="entry name" value="CELL DIVISION PROTEIN SEPF"/>
    <property type="match status" value="1"/>
</dbReference>
<dbReference type="PANTHER" id="PTHR35798:SF1">
    <property type="entry name" value="CELL DIVISION PROTEIN SEPF"/>
    <property type="match status" value="1"/>
</dbReference>
<dbReference type="Pfam" id="PF04472">
    <property type="entry name" value="SepF"/>
    <property type="match status" value="1"/>
</dbReference>
<proteinExistence type="inferred from homology"/>
<evidence type="ECO:0000255" key="1">
    <source>
        <dbReference type="HAMAP-Rule" id="MF_01197"/>
    </source>
</evidence>
<evidence type="ECO:0000256" key="2">
    <source>
        <dbReference type="SAM" id="MobiDB-lite"/>
    </source>
</evidence>
<organism>
    <name type="scientific">Prochlorococcus marinus (strain MIT 9313)</name>
    <dbReference type="NCBI Taxonomy" id="74547"/>
    <lineage>
        <taxon>Bacteria</taxon>
        <taxon>Bacillati</taxon>
        <taxon>Cyanobacteriota</taxon>
        <taxon>Cyanophyceae</taxon>
        <taxon>Synechococcales</taxon>
        <taxon>Prochlorococcaceae</taxon>
        <taxon>Prochlorococcus</taxon>
    </lineage>
</organism>
<keyword id="KW-0131">Cell cycle</keyword>
<keyword id="KW-0132">Cell division</keyword>
<keyword id="KW-0963">Cytoplasm</keyword>
<keyword id="KW-1185">Reference proteome</keyword>
<keyword id="KW-0717">Septation</keyword>
<accession>Q7V8W6</accession>
<comment type="function">
    <text evidence="1">Cell division protein that is part of the divisome complex and is recruited early to the Z-ring. Probably stimulates Z-ring formation, perhaps through the cross-linking of FtsZ protofilaments. Its function overlaps with FtsA.</text>
</comment>
<comment type="subunit">
    <text evidence="1">Homodimer. Interacts with FtsZ.</text>
</comment>
<comment type="subcellular location">
    <subcellularLocation>
        <location evidence="1">Cytoplasm</location>
    </subcellularLocation>
    <text evidence="1">Localizes to the division site, in a FtsZ-dependent manner.</text>
</comment>
<comment type="similarity">
    <text evidence="1">Belongs to the SepF family.</text>
</comment>
<name>SEPF_PROMM</name>
<feature type="chain" id="PRO_0000334062" description="Cell division protein SepF">
    <location>
        <begin position="1"/>
        <end position="194"/>
    </location>
</feature>
<feature type="region of interest" description="Disordered" evidence="2">
    <location>
        <begin position="35"/>
        <end position="54"/>
    </location>
</feature>
<feature type="region of interest" description="Disordered" evidence="2">
    <location>
        <begin position="159"/>
        <end position="194"/>
    </location>
</feature>
<sequence>MSLISRLRAVVAGDDYLDSDYDDLDYDTDDHMDADHRSDHASGGALATPSDSSPFDLGGGFSGSNVIGMPGVGSTSAEVNLMEPRSFDEMPRAIQALRERKTVILNLTMMEPDQAQRAVDFVAGGTFAIDGHQERVGESIFLFAPSCVTVSNTSYDEASAPSMVSQDHDSVPSSSQQTGAAPVPAWEATSAGGL</sequence>